<proteinExistence type="evidence at protein level"/>
<reference key="1">
    <citation type="journal article" date="1998" name="Genes Cells">
        <title>Identification of sna41 gene, which is the suppressor of nda4 mutation and is involved in DNA replication in Schizosaccharomyces pombe.</title>
        <authorList>
            <person name="Miyake S."/>
            <person name="Yamashita S."/>
        </authorList>
    </citation>
    <scope>NUCLEOTIDE SEQUENCE [GENOMIC DNA]</scope>
    <scope>FUNCTION</scope>
    <scope>SUBCELLULAR LOCATION</scope>
</reference>
<reference key="2">
    <citation type="journal article" date="2002" name="Nature">
        <title>The genome sequence of Schizosaccharomyces pombe.</title>
        <authorList>
            <person name="Wood V."/>
            <person name="Gwilliam R."/>
            <person name="Rajandream M.A."/>
            <person name="Lyne M.H."/>
            <person name="Lyne R."/>
            <person name="Stewart A."/>
            <person name="Sgouros J.G."/>
            <person name="Peat N."/>
            <person name="Hayles J."/>
            <person name="Baker S.G."/>
            <person name="Basham D."/>
            <person name="Bowman S."/>
            <person name="Brooks K."/>
            <person name="Brown D."/>
            <person name="Brown S."/>
            <person name="Chillingworth T."/>
            <person name="Churcher C.M."/>
            <person name="Collins M."/>
            <person name="Connor R."/>
            <person name="Cronin A."/>
            <person name="Davis P."/>
            <person name="Feltwell T."/>
            <person name="Fraser A."/>
            <person name="Gentles S."/>
            <person name="Goble A."/>
            <person name="Hamlin N."/>
            <person name="Harris D.E."/>
            <person name="Hidalgo J."/>
            <person name="Hodgson G."/>
            <person name="Holroyd S."/>
            <person name="Hornsby T."/>
            <person name="Howarth S."/>
            <person name="Huckle E.J."/>
            <person name="Hunt S."/>
            <person name="Jagels K."/>
            <person name="James K.D."/>
            <person name="Jones L."/>
            <person name="Jones M."/>
            <person name="Leather S."/>
            <person name="McDonald S."/>
            <person name="McLean J."/>
            <person name="Mooney P."/>
            <person name="Moule S."/>
            <person name="Mungall K.L."/>
            <person name="Murphy L.D."/>
            <person name="Niblett D."/>
            <person name="Odell C."/>
            <person name="Oliver K."/>
            <person name="O'Neil S."/>
            <person name="Pearson D."/>
            <person name="Quail M.A."/>
            <person name="Rabbinowitsch E."/>
            <person name="Rutherford K.M."/>
            <person name="Rutter S."/>
            <person name="Saunders D."/>
            <person name="Seeger K."/>
            <person name="Sharp S."/>
            <person name="Skelton J."/>
            <person name="Simmonds M.N."/>
            <person name="Squares R."/>
            <person name="Squares S."/>
            <person name="Stevens K."/>
            <person name="Taylor K."/>
            <person name="Taylor R.G."/>
            <person name="Tivey A."/>
            <person name="Walsh S.V."/>
            <person name="Warren T."/>
            <person name="Whitehead S."/>
            <person name="Woodward J.R."/>
            <person name="Volckaert G."/>
            <person name="Aert R."/>
            <person name="Robben J."/>
            <person name="Grymonprez B."/>
            <person name="Weltjens I."/>
            <person name="Vanstreels E."/>
            <person name="Rieger M."/>
            <person name="Schaefer M."/>
            <person name="Mueller-Auer S."/>
            <person name="Gabel C."/>
            <person name="Fuchs M."/>
            <person name="Duesterhoeft A."/>
            <person name="Fritzc C."/>
            <person name="Holzer E."/>
            <person name="Moestl D."/>
            <person name="Hilbert H."/>
            <person name="Borzym K."/>
            <person name="Langer I."/>
            <person name="Beck A."/>
            <person name="Lehrach H."/>
            <person name="Reinhardt R."/>
            <person name="Pohl T.M."/>
            <person name="Eger P."/>
            <person name="Zimmermann W."/>
            <person name="Wedler H."/>
            <person name="Wambutt R."/>
            <person name="Purnelle B."/>
            <person name="Goffeau A."/>
            <person name="Cadieu E."/>
            <person name="Dreano S."/>
            <person name="Gloux S."/>
            <person name="Lelaure V."/>
            <person name="Mottier S."/>
            <person name="Galibert F."/>
            <person name="Aves S.J."/>
            <person name="Xiang Z."/>
            <person name="Hunt C."/>
            <person name="Moore K."/>
            <person name="Hurst S.M."/>
            <person name="Lucas M."/>
            <person name="Rochet M."/>
            <person name="Gaillardin C."/>
            <person name="Tallada V.A."/>
            <person name="Garzon A."/>
            <person name="Thode G."/>
            <person name="Daga R.R."/>
            <person name="Cruzado L."/>
            <person name="Jimenez J."/>
            <person name="Sanchez M."/>
            <person name="del Rey F."/>
            <person name="Benito J."/>
            <person name="Dominguez A."/>
            <person name="Revuelta J.L."/>
            <person name="Moreno S."/>
            <person name="Armstrong J."/>
            <person name="Forsburg S.L."/>
            <person name="Cerutti L."/>
            <person name="Lowe T."/>
            <person name="McCombie W.R."/>
            <person name="Paulsen I."/>
            <person name="Potashkin J."/>
            <person name="Shpakovski G.V."/>
            <person name="Ussery D."/>
            <person name="Barrell B.G."/>
            <person name="Nurse P."/>
        </authorList>
    </citation>
    <scope>NUCLEOTIDE SEQUENCE [LARGE SCALE GENOMIC DNA]</scope>
    <source>
        <strain>972 / ATCC 24843</strain>
    </source>
</reference>
<reference key="3">
    <citation type="journal article" date="2002" name="Mol. Biol. Cell">
        <title>SpSld3 is required for loading and maintenance of SpCdc45 on chromatin in DNA replication in fission yeast.</title>
        <authorList>
            <person name="Nakajima R."/>
            <person name="Masukata H."/>
        </authorList>
    </citation>
    <scope>INTERACTION WITH SLD3</scope>
</reference>
<evidence type="ECO:0000256" key="1">
    <source>
        <dbReference type="SAM" id="MobiDB-lite"/>
    </source>
</evidence>
<evidence type="ECO:0000269" key="2">
    <source>
    </source>
</evidence>
<evidence type="ECO:0000269" key="3">
    <source>
    </source>
</evidence>
<evidence type="ECO:0000305" key="4"/>
<dbReference type="EMBL" id="AB001739">
    <property type="protein sequence ID" value="BAA28947.1"/>
    <property type="molecule type" value="Genomic_DNA"/>
</dbReference>
<dbReference type="EMBL" id="CU329670">
    <property type="protein sequence ID" value="CAC05732.1"/>
    <property type="molecule type" value="Genomic_DNA"/>
</dbReference>
<dbReference type="PIR" id="T43018">
    <property type="entry name" value="T43018"/>
</dbReference>
<dbReference type="RefSeq" id="NP_594693.1">
    <property type="nucleotide sequence ID" value="NM_001020121.2"/>
</dbReference>
<dbReference type="SMR" id="O74113"/>
<dbReference type="BioGRID" id="278735">
    <property type="interactions" value="23"/>
</dbReference>
<dbReference type="FunCoup" id="O74113">
    <property type="interactions" value="389"/>
</dbReference>
<dbReference type="IntAct" id="O74113">
    <property type="interactions" value="3"/>
</dbReference>
<dbReference type="MINT" id="O74113"/>
<dbReference type="STRING" id="284812.O74113"/>
<dbReference type="iPTMnet" id="O74113"/>
<dbReference type="PaxDb" id="4896-SPAC17D4.02.1"/>
<dbReference type="EnsemblFungi" id="SPAC17D4.02.1">
    <property type="protein sequence ID" value="SPAC17D4.02.1:pep"/>
    <property type="gene ID" value="SPAC17D4.02"/>
</dbReference>
<dbReference type="GeneID" id="2542266"/>
<dbReference type="KEGG" id="spo:2542266"/>
<dbReference type="PomBase" id="SPAC17D4.02"/>
<dbReference type="VEuPathDB" id="FungiDB:SPAC17D4.02"/>
<dbReference type="eggNOG" id="KOG2475">
    <property type="taxonomic scope" value="Eukaryota"/>
</dbReference>
<dbReference type="HOGENOM" id="CLU_005871_3_0_1"/>
<dbReference type="InParanoid" id="O74113"/>
<dbReference type="OMA" id="EDCFMEA"/>
<dbReference type="PhylomeDB" id="O74113"/>
<dbReference type="Reactome" id="R-SPO-176187">
    <property type="pathway name" value="Activation of ATR in response to replication stress"/>
</dbReference>
<dbReference type="Reactome" id="R-SPO-68962">
    <property type="pathway name" value="Activation of the pre-replicative complex"/>
</dbReference>
<dbReference type="PRO" id="PR:O74113"/>
<dbReference type="Proteomes" id="UP000002485">
    <property type="component" value="Chromosome I"/>
</dbReference>
<dbReference type="GO" id="GO:0000785">
    <property type="term" value="C:chromatin"/>
    <property type="evidence" value="ECO:0000314"/>
    <property type="project" value="PomBase"/>
</dbReference>
<dbReference type="GO" id="GO:0005829">
    <property type="term" value="C:cytosol"/>
    <property type="evidence" value="ECO:0007005"/>
    <property type="project" value="PomBase"/>
</dbReference>
<dbReference type="GO" id="GO:0031261">
    <property type="term" value="C:DNA replication preinitiation complex"/>
    <property type="evidence" value="ECO:0000314"/>
    <property type="project" value="PomBase"/>
</dbReference>
<dbReference type="GO" id="GO:0043596">
    <property type="term" value="C:nuclear replication fork"/>
    <property type="evidence" value="ECO:0000305"/>
    <property type="project" value="PomBase"/>
</dbReference>
<dbReference type="GO" id="GO:0005634">
    <property type="term" value="C:nucleus"/>
    <property type="evidence" value="ECO:0000314"/>
    <property type="project" value="PomBase"/>
</dbReference>
<dbReference type="GO" id="GO:0003682">
    <property type="term" value="F:chromatin binding"/>
    <property type="evidence" value="ECO:0000314"/>
    <property type="project" value="PomBase"/>
</dbReference>
<dbReference type="GO" id="GO:0003688">
    <property type="term" value="F:DNA replication origin binding"/>
    <property type="evidence" value="ECO:0000318"/>
    <property type="project" value="GO_Central"/>
</dbReference>
<dbReference type="GO" id="GO:0003697">
    <property type="term" value="F:single-stranded DNA binding"/>
    <property type="evidence" value="ECO:0000318"/>
    <property type="project" value="GO_Central"/>
</dbReference>
<dbReference type="GO" id="GO:0006270">
    <property type="term" value="P:DNA replication initiation"/>
    <property type="evidence" value="ECO:0000318"/>
    <property type="project" value="GO_Central"/>
</dbReference>
<dbReference type="GO" id="GO:0000727">
    <property type="term" value="P:double-strand break repair via break-induced replication"/>
    <property type="evidence" value="ECO:0000318"/>
    <property type="project" value="GO_Central"/>
</dbReference>
<dbReference type="GO" id="GO:1902977">
    <property type="term" value="P:mitotic DNA replication preinitiation complex assembly"/>
    <property type="evidence" value="ECO:0000315"/>
    <property type="project" value="PomBase"/>
</dbReference>
<dbReference type="GO" id="GO:0031573">
    <property type="term" value="P:mitotic intra-S DNA damage checkpoint signaling"/>
    <property type="evidence" value="ECO:0000315"/>
    <property type="project" value="PomBase"/>
</dbReference>
<dbReference type="InterPro" id="IPR003874">
    <property type="entry name" value="CDC45"/>
</dbReference>
<dbReference type="PANTHER" id="PTHR10507">
    <property type="entry name" value="CDC45-RELATED PROTEIN"/>
    <property type="match status" value="1"/>
</dbReference>
<dbReference type="PANTHER" id="PTHR10507:SF0">
    <property type="entry name" value="CELL DIVISION CONTROL PROTEIN 45 HOMOLOG"/>
    <property type="match status" value="1"/>
</dbReference>
<dbReference type="Pfam" id="PF02724">
    <property type="entry name" value="CDC45"/>
    <property type="match status" value="1"/>
</dbReference>
<sequence length="638" mass="73379">MFIKRSDYASAYLKIKEASVSGGCTVQLFVALDPDALCACKLLSTLLKGDFISHKIRPVSGYRDLEQANKTLLEQNEDIKFIILLNCGTMVDLNNYLVSMEDVSIYVIDSHRPHNLNNIYIENNIFVFDDGDIEEDMNKIHDAWYAFNSHELSDEENSDSSNEREEEVEDDNRSVESYSSSDYQARSRRRFSEETTQRRAEIKEKRKKRKEFASILSEYYEKGSWYGESITNILFAVASMLGREDNDMLWLAIVGLTCLEIHCQSSKKYFNRSYSLLKDEVNRLNPSPLENQIVGRAHGKTPHDQSIRLEDEFRFMLVRHWSLYDSMLHSAYVGSRLHIWSEEGRKRLHKLLAKMGLSLVECKQTYIHMNMDLKKTLKSSLKRFAPFYGLDDVIFHSFTRTYGFKCTLSASDVSYAISALLEMGNTGVLLQSKTVARSPDMTEEEYLEKFENAQNQEWLHNFYDAYDALDDVDSLERALKLAMHLQRAIVRTGITLLEKRAIKTLRSFRFGLINEGPDLKIFMHPLALTKMSLWIAEAINEQEREFGKLRHLPLVLAAFVEEKNRYLIVGTSTSAFTSNEDDDDDDGHGHNRFGVAFQEVANMTSATLQMDCFEASVIECQKSDLGVFLESLSFKTLL</sequence>
<protein>
    <recommendedName>
        <fullName>Cell division control protein 45 homolog</fullName>
    </recommendedName>
    <alternativeName>
        <fullName>Suppressor of nda4 protein</fullName>
    </alternativeName>
</protein>
<organism>
    <name type="scientific">Schizosaccharomyces pombe (strain 972 / ATCC 24843)</name>
    <name type="common">Fission yeast</name>
    <dbReference type="NCBI Taxonomy" id="284812"/>
    <lineage>
        <taxon>Eukaryota</taxon>
        <taxon>Fungi</taxon>
        <taxon>Dikarya</taxon>
        <taxon>Ascomycota</taxon>
        <taxon>Taphrinomycotina</taxon>
        <taxon>Schizosaccharomycetes</taxon>
        <taxon>Schizosaccharomycetales</taxon>
        <taxon>Schizosaccharomycetaceae</taxon>
        <taxon>Schizosaccharomyces</taxon>
    </lineage>
</organism>
<gene>
    <name type="primary">sna41</name>
    <name type="ORF">SPAC17D4.02</name>
</gene>
<name>CDC45_SCHPO</name>
<accession>O74113</accession>
<feature type="chain" id="PRO_0000192818" description="Cell division control protein 45 homolog">
    <location>
        <begin position="1"/>
        <end position="638"/>
    </location>
</feature>
<feature type="region of interest" description="Disordered" evidence="1">
    <location>
        <begin position="151"/>
        <end position="204"/>
    </location>
</feature>
<feature type="compositionally biased region" description="Acidic residues" evidence="1">
    <location>
        <begin position="153"/>
        <end position="170"/>
    </location>
</feature>
<feature type="compositionally biased region" description="Basic and acidic residues" evidence="1">
    <location>
        <begin position="190"/>
        <end position="204"/>
    </location>
</feature>
<keyword id="KW-0131">Cell cycle</keyword>
<keyword id="KW-0235">DNA replication</keyword>
<keyword id="KW-0539">Nucleus</keyword>
<keyword id="KW-1185">Reference proteome</keyword>
<comment type="function">
    <text evidence="3">Required for initiation of chromosomal DNA replication. May have a role in regulating the MCM proteins nda1 and nda4.</text>
</comment>
<comment type="subunit">
    <text evidence="2">Interacts with sld3.</text>
</comment>
<comment type="interaction">
    <interactant intactId="EBI-1559427">
        <id>O74113</id>
    </interactant>
    <interactant intactId="EBI-1559416">
        <id>Q09761</id>
        <label>sld3</label>
    </interactant>
    <organismsDiffer>false</organismsDiffer>
    <experiments>2</experiments>
</comment>
<comment type="subcellular location">
    <subcellularLocation>
        <location evidence="3">Nucleus</location>
    </subcellularLocation>
</comment>
<comment type="similarity">
    <text evidence="4">Belongs to the CDC45 family.</text>
</comment>